<proteinExistence type="evidence at protein level"/>
<name>PIAS3_HUMAN</name>
<protein>
    <recommendedName>
        <fullName>E3 SUMO-protein ligase PIAS3</fullName>
        <ecNumber>2.3.2.-</ecNumber>
    </recommendedName>
    <alternativeName>
        <fullName evidence="17">E3 SUMO-protein transferase PIAS3</fullName>
    </alternativeName>
    <alternativeName>
        <fullName>Protein inhibitor of activated STAT protein 3</fullName>
    </alternativeName>
</protein>
<gene>
    <name type="primary">PIAS3</name>
</gene>
<dbReference type="EC" id="2.3.2.-"/>
<dbReference type="EMBL" id="AB021868">
    <property type="protein sequence ID" value="BAA78533.1"/>
    <property type="status" value="ALT_INIT"/>
    <property type="molecule type" value="mRNA"/>
</dbReference>
<dbReference type="EMBL" id="BC001154">
    <property type="protein sequence ID" value="AAH01154.2"/>
    <property type="molecule type" value="mRNA"/>
</dbReference>
<dbReference type="EMBL" id="BC030556">
    <property type="protein sequence ID" value="AAH30556.2"/>
    <property type="molecule type" value="mRNA"/>
</dbReference>
<dbReference type="CCDS" id="CCDS72866.1"/>
<dbReference type="PIR" id="T34525">
    <property type="entry name" value="T34525"/>
</dbReference>
<dbReference type="RefSeq" id="NP_006090.2">
    <property type="nucleotide sequence ID" value="NM_006099.3"/>
</dbReference>
<dbReference type="PDB" id="4MVT">
    <property type="method" value="X-ray"/>
    <property type="resolution" value="2.30 A"/>
    <property type="chains" value="A/B/C/D=112-467"/>
</dbReference>
<dbReference type="PDBsum" id="4MVT"/>
<dbReference type="SMR" id="Q9Y6X2"/>
<dbReference type="BioGRID" id="115673">
    <property type="interactions" value="79"/>
</dbReference>
<dbReference type="CORUM" id="Q9Y6X2"/>
<dbReference type="DIP" id="DIP-5969N"/>
<dbReference type="ELM" id="Q9Y6X2"/>
<dbReference type="FunCoup" id="Q9Y6X2">
    <property type="interactions" value="2437"/>
</dbReference>
<dbReference type="IntAct" id="Q9Y6X2">
    <property type="interactions" value="54"/>
</dbReference>
<dbReference type="MINT" id="Q9Y6X2"/>
<dbReference type="STRING" id="9606.ENSP00000376765"/>
<dbReference type="GlyGen" id="Q9Y6X2">
    <property type="glycosylation" value="1 site, 1 O-linked glycan (1 site)"/>
</dbReference>
<dbReference type="iPTMnet" id="Q9Y6X2"/>
<dbReference type="PhosphoSitePlus" id="Q9Y6X2"/>
<dbReference type="BioMuta" id="PIAS3"/>
<dbReference type="DMDM" id="56405390"/>
<dbReference type="jPOST" id="Q9Y6X2"/>
<dbReference type="MassIVE" id="Q9Y6X2"/>
<dbReference type="PaxDb" id="9606-ENSP00000376765"/>
<dbReference type="PeptideAtlas" id="Q9Y6X2"/>
<dbReference type="ProteomicsDB" id="86810"/>
<dbReference type="Pumba" id="Q9Y6X2"/>
<dbReference type="Antibodypedia" id="20233">
    <property type="antibodies" value="256 antibodies from 39 providers"/>
</dbReference>
<dbReference type="DNASU" id="10401"/>
<dbReference type="Ensembl" id="ENST00000393045.7">
    <property type="protein sequence ID" value="ENSP00000376765.2"/>
    <property type="gene ID" value="ENSG00000131788.16"/>
</dbReference>
<dbReference type="GeneID" id="10401"/>
<dbReference type="KEGG" id="hsa:10401"/>
<dbReference type="MANE-Select" id="ENST00000393045.7">
    <property type="protein sequence ID" value="ENSP00000376765.2"/>
    <property type="RefSeq nucleotide sequence ID" value="NM_006099.3"/>
    <property type="RefSeq protein sequence ID" value="NP_006090.2"/>
</dbReference>
<dbReference type="UCSC" id="uc001eoc.2">
    <property type="organism name" value="human"/>
</dbReference>
<dbReference type="AGR" id="HGNC:16861"/>
<dbReference type="CTD" id="10401"/>
<dbReference type="DisGeNET" id="10401"/>
<dbReference type="GeneCards" id="PIAS3"/>
<dbReference type="HGNC" id="HGNC:16861">
    <property type="gene designation" value="PIAS3"/>
</dbReference>
<dbReference type="HPA" id="ENSG00000131788">
    <property type="expression patterns" value="Low tissue specificity"/>
</dbReference>
<dbReference type="MIM" id="605987">
    <property type="type" value="gene"/>
</dbReference>
<dbReference type="neXtProt" id="NX_Q9Y6X2"/>
<dbReference type="OpenTargets" id="ENSG00000131788"/>
<dbReference type="PharmGKB" id="PA134989011"/>
<dbReference type="VEuPathDB" id="HostDB:ENSG00000131788"/>
<dbReference type="eggNOG" id="KOG2169">
    <property type="taxonomic scope" value="Eukaryota"/>
</dbReference>
<dbReference type="GeneTree" id="ENSGT01030000234539"/>
<dbReference type="InParanoid" id="Q9Y6X2"/>
<dbReference type="OMA" id="ENTFMFH"/>
<dbReference type="OrthoDB" id="10263264at2759"/>
<dbReference type="PAN-GO" id="Q9Y6X2">
    <property type="GO annotations" value="4 GO annotations based on evolutionary models"/>
</dbReference>
<dbReference type="PhylomeDB" id="Q9Y6X2"/>
<dbReference type="TreeFam" id="TF323787"/>
<dbReference type="PathwayCommons" id="Q9Y6X2"/>
<dbReference type="Reactome" id="R-HSA-3232118">
    <property type="pathway name" value="SUMOylation of transcription factors"/>
</dbReference>
<dbReference type="Reactome" id="R-HSA-3899300">
    <property type="pathway name" value="SUMOylation of transcription cofactors"/>
</dbReference>
<dbReference type="Reactome" id="R-HSA-4090294">
    <property type="pathway name" value="SUMOylation of intracellular receptors"/>
</dbReference>
<dbReference type="Reactome" id="R-HSA-4615885">
    <property type="pathway name" value="SUMOylation of DNA replication proteins"/>
</dbReference>
<dbReference type="Reactome" id="R-HSA-4755510">
    <property type="pathway name" value="SUMOylation of immune response proteins"/>
</dbReference>
<dbReference type="Reactome" id="R-HSA-5696395">
    <property type="pathway name" value="Formation of Incision Complex in GG-NER"/>
</dbReference>
<dbReference type="SignaLink" id="Q9Y6X2"/>
<dbReference type="SIGNOR" id="Q9Y6X2"/>
<dbReference type="UniPathway" id="UPA00886"/>
<dbReference type="BioGRID-ORCS" id="10401">
    <property type="hits" value="28 hits in 1194 CRISPR screens"/>
</dbReference>
<dbReference type="CD-CODE" id="804901D1">
    <property type="entry name" value="Nuclear speckle"/>
</dbReference>
<dbReference type="ChiTaRS" id="PIAS3">
    <property type="organism name" value="human"/>
</dbReference>
<dbReference type="EvolutionaryTrace" id="Q9Y6X2"/>
<dbReference type="GeneWiki" id="PIAS3"/>
<dbReference type="GenomeRNAi" id="10401"/>
<dbReference type="Pharos" id="Q9Y6X2">
    <property type="development level" value="Tbio"/>
</dbReference>
<dbReference type="PRO" id="PR:Q9Y6X2"/>
<dbReference type="Proteomes" id="UP000005640">
    <property type="component" value="Chromosome 1"/>
</dbReference>
<dbReference type="RNAct" id="Q9Y6X2">
    <property type="molecule type" value="protein"/>
</dbReference>
<dbReference type="Bgee" id="ENSG00000131788">
    <property type="expression patterns" value="Expressed in right uterine tube and 173 other cell types or tissues"/>
</dbReference>
<dbReference type="ExpressionAtlas" id="Q9Y6X2">
    <property type="expression patterns" value="baseline and differential"/>
</dbReference>
<dbReference type="GO" id="GO:0000785">
    <property type="term" value="C:chromatin"/>
    <property type="evidence" value="ECO:0000318"/>
    <property type="project" value="GO_Central"/>
</dbReference>
<dbReference type="GO" id="GO:0098978">
    <property type="term" value="C:glutamatergic synapse"/>
    <property type="evidence" value="ECO:0007669"/>
    <property type="project" value="Ensembl"/>
</dbReference>
<dbReference type="GO" id="GO:0016607">
    <property type="term" value="C:nuclear speck"/>
    <property type="evidence" value="ECO:0007669"/>
    <property type="project" value="UniProtKB-SubCell"/>
</dbReference>
<dbReference type="GO" id="GO:0005654">
    <property type="term" value="C:nucleoplasm"/>
    <property type="evidence" value="ECO:0000304"/>
    <property type="project" value="Reactome"/>
</dbReference>
<dbReference type="GO" id="GO:0099524">
    <property type="term" value="C:postsynaptic cytosol"/>
    <property type="evidence" value="ECO:0007669"/>
    <property type="project" value="Ensembl"/>
</dbReference>
<dbReference type="GO" id="GO:0099523">
    <property type="term" value="C:presynaptic cytosol"/>
    <property type="evidence" value="ECO:0007669"/>
    <property type="project" value="Ensembl"/>
</dbReference>
<dbReference type="GO" id="GO:0061665">
    <property type="term" value="F:SUMO ligase activity"/>
    <property type="evidence" value="ECO:0000318"/>
    <property type="project" value="GO_Central"/>
</dbReference>
<dbReference type="GO" id="GO:0019789">
    <property type="term" value="F:SUMO transferase activity"/>
    <property type="evidence" value="ECO:0000269"/>
    <property type="project" value="Reactome"/>
</dbReference>
<dbReference type="GO" id="GO:0003712">
    <property type="term" value="F:transcription coregulator activity"/>
    <property type="evidence" value="ECO:0000318"/>
    <property type="project" value="GO_Central"/>
</dbReference>
<dbReference type="GO" id="GO:0008270">
    <property type="term" value="F:zinc ion binding"/>
    <property type="evidence" value="ECO:0007669"/>
    <property type="project" value="UniProtKB-KW"/>
</dbReference>
<dbReference type="GO" id="GO:0010629">
    <property type="term" value="P:negative regulation of gene expression"/>
    <property type="evidence" value="ECO:0007669"/>
    <property type="project" value="Ensembl"/>
</dbReference>
<dbReference type="GO" id="GO:0045671">
    <property type="term" value="P:negative regulation of osteoclast differentiation"/>
    <property type="evidence" value="ECO:0007669"/>
    <property type="project" value="Ensembl"/>
</dbReference>
<dbReference type="GO" id="GO:0033234">
    <property type="term" value="P:negative regulation of protein sumoylation"/>
    <property type="evidence" value="ECO:0000314"/>
    <property type="project" value="UniProtKB"/>
</dbReference>
<dbReference type="GO" id="GO:0000122">
    <property type="term" value="P:negative regulation of transcription by RNA polymerase II"/>
    <property type="evidence" value="ECO:0007669"/>
    <property type="project" value="Ensembl"/>
</dbReference>
<dbReference type="GO" id="GO:0033235">
    <property type="term" value="P:positive regulation of protein sumoylation"/>
    <property type="evidence" value="ECO:0000314"/>
    <property type="project" value="UniProtKB"/>
</dbReference>
<dbReference type="GO" id="GO:0016925">
    <property type="term" value="P:protein sumoylation"/>
    <property type="evidence" value="ECO:0000250"/>
    <property type="project" value="UniProtKB"/>
</dbReference>
<dbReference type="GO" id="GO:0006357">
    <property type="term" value="P:regulation of transcription by RNA polymerase II"/>
    <property type="evidence" value="ECO:0000318"/>
    <property type="project" value="GO_Central"/>
</dbReference>
<dbReference type="GO" id="GO:0010803">
    <property type="term" value="P:regulation of tumor necrosis factor-mediated signaling pathway"/>
    <property type="evidence" value="ECO:0007669"/>
    <property type="project" value="Ensembl"/>
</dbReference>
<dbReference type="CDD" id="cd16820">
    <property type="entry name" value="SP-RING_PIAS3"/>
    <property type="match status" value="1"/>
</dbReference>
<dbReference type="FunFam" id="1.10.720.30:FF:000001">
    <property type="entry name" value="E3 SUMO-protein ligase PIAS2 isoform 1"/>
    <property type="match status" value="1"/>
</dbReference>
<dbReference type="FunFam" id="2.60.120.780:FF:000001">
    <property type="entry name" value="E3 SUMO-protein ligase PIAS2 isoform X1"/>
    <property type="match status" value="1"/>
</dbReference>
<dbReference type="FunFam" id="3.30.40.10:FF:000003">
    <property type="entry name" value="E3 SUMO-protein ligase PIAS2 isoform X1"/>
    <property type="match status" value="1"/>
</dbReference>
<dbReference type="Gene3D" id="2.60.120.780">
    <property type="entry name" value="PINIT domain"/>
    <property type="match status" value="1"/>
</dbReference>
<dbReference type="Gene3D" id="1.10.720.30">
    <property type="entry name" value="SAP domain"/>
    <property type="match status" value="1"/>
</dbReference>
<dbReference type="Gene3D" id="3.30.40.10">
    <property type="entry name" value="Zinc/RING finger domain, C3HC4 (zinc finger)"/>
    <property type="match status" value="1"/>
</dbReference>
<dbReference type="IDEAL" id="IID00506"/>
<dbReference type="InterPro" id="IPR023321">
    <property type="entry name" value="PINIT"/>
</dbReference>
<dbReference type="InterPro" id="IPR038654">
    <property type="entry name" value="PINIT_sf"/>
</dbReference>
<dbReference type="InterPro" id="IPR003034">
    <property type="entry name" value="SAP_dom"/>
</dbReference>
<dbReference type="InterPro" id="IPR036361">
    <property type="entry name" value="SAP_dom_sf"/>
</dbReference>
<dbReference type="InterPro" id="IPR004181">
    <property type="entry name" value="Znf_MIZ"/>
</dbReference>
<dbReference type="InterPro" id="IPR013083">
    <property type="entry name" value="Znf_RING/FYVE/PHD"/>
</dbReference>
<dbReference type="PANTHER" id="PTHR10782:SF10">
    <property type="entry name" value="E3 SUMO-PROTEIN LIGASE PIAS3"/>
    <property type="match status" value="1"/>
</dbReference>
<dbReference type="PANTHER" id="PTHR10782">
    <property type="entry name" value="ZINC FINGER MIZ DOMAIN-CONTAINING PROTEIN"/>
    <property type="match status" value="1"/>
</dbReference>
<dbReference type="Pfam" id="PF14324">
    <property type="entry name" value="PINIT"/>
    <property type="match status" value="1"/>
</dbReference>
<dbReference type="Pfam" id="PF02037">
    <property type="entry name" value="SAP"/>
    <property type="match status" value="1"/>
</dbReference>
<dbReference type="Pfam" id="PF02891">
    <property type="entry name" value="zf-MIZ"/>
    <property type="match status" value="1"/>
</dbReference>
<dbReference type="SMART" id="SM00513">
    <property type="entry name" value="SAP"/>
    <property type="match status" value="1"/>
</dbReference>
<dbReference type="SUPFAM" id="SSF68906">
    <property type="entry name" value="SAP domain"/>
    <property type="match status" value="1"/>
</dbReference>
<dbReference type="PROSITE" id="PS51466">
    <property type="entry name" value="PINIT"/>
    <property type="match status" value="1"/>
</dbReference>
<dbReference type="PROSITE" id="PS50800">
    <property type="entry name" value="SAP"/>
    <property type="match status" value="1"/>
</dbReference>
<dbReference type="PROSITE" id="PS51044">
    <property type="entry name" value="ZF_SP_RING"/>
    <property type="match status" value="1"/>
</dbReference>
<feature type="chain" id="PRO_0000218979" description="E3 SUMO-protein ligase PIAS3">
    <location>
        <begin position="1"/>
        <end position="628"/>
    </location>
</feature>
<feature type="domain" description="SAP" evidence="3">
    <location>
        <begin position="11"/>
        <end position="45"/>
    </location>
</feature>
<feature type="domain" description="PINIT" evidence="5">
    <location>
        <begin position="115"/>
        <end position="280"/>
    </location>
</feature>
<feature type="zinc finger region" description="SP-RING-type" evidence="4">
    <location>
        <begin position="312"/>
        <end position="393"/>
    </location>
</feature>
<feature type="region of interest" description="Interaction with CCAR2" evidence="14">
    <location>
        <begin position="1"/>
        <end position="200"/>
    </location>
</feature>
<feature type="region of interest" description="SUMO1-binding" evidence="1">
    <location>
        <begin position="450"/>
        <end position="460"/>
    </location>
</feature>
<feature type="region of interest" description="Disordered" evidence="6">
    <location>
        <begin position="597"/>
        <end position="617"/>
    </location>
</feature>
<feature type="short sequence motif" description="LXXLL motif">
    <location>
        <begin position="19"/>
        <end position="23"/>
    </location>
</feature>
<feature type="binding site" evidence="4">
    <location>
        <position position="343"/>
    </location>
    <ligand>
        <name>Zn(2+)</name>
        <dbReference type="ChEBI" id="CHEBI:29105"/>
    </ligand>
</feature>
<feature type="binding site" evidence="4">
    <location>
        <position position="345"/>
    </location>
    <ligand>
        <name>Zn(2+)</name>
        <dbReference type="ChEBI" id="CHEBI:29105"/>
    </ligand>
</feature>
<feature type="binding site" evidence="4">
    <location>
        <position position="366"/>
    </location>
    <ligand>
        <name>Zn(2+)</name>
        <dbReference type="ChEBI" id="CHEBI:29105"/>
    </ligand>
</feature>
<feature type="binding site" evidence="4">
    <location>
        <position position="369"/>
    </location>
    <ligand>
        <name>Zn(2+)</name>
        <dbReference type="ChEBI" id="CHEBI:29105"/>
    </ligand>
</feature>
<feature type="cross-link" description="Glycyl lysine isopeptide (Lys-Gly) (interchain with G-Cter in SUMO2)" evidence="20">
    <location>
        <position position="46"/>
    </location>
</feature>
<feature type="cross-link" description="Glycyl lysine isopeptide (Lys-Gly) (interchain with G-Cter in SUMO2)" evidence="20">
    <location>
        <position position="56"/>
    </location>
</feature>
<feature type="cross-link" description="Glycyl lysine isopeptide (Lys-Gly) (interchain with G-Cter in SUMO2)" evidence="18 19 20">
    <location>
        <position position="230"/>
    </location>
</feature>
<feature type="cross-link" description="Glycyl lysine isopeptide (Lys-Gly) (interchain with G-Cter in SUMO2)" evidence="18 20">
    <location>
        <position position="307"/>
    </location>
</feature>
<feature type="cross-link" description="Glycyl lysine isopeptide (Lys-Gly) (interchain with G-Cter in SUMO2)" evidence="20">
    <location>
        <position position="466"/>
    </location>
</feature>
<feature type="cross-link" description="Glycyl lysine isopeptide (Lys-Gly) (interchain with G-Cter in SUMO2)" evidence="20">
    <location>
        <position position="482"/>
    </location>
</feature>
<feature type="sequence variant" id="VAR_050535" description="In dbSNP:rs17354559.">
    <original>S</original>
    <variation>C</variation>
    <location>
        <position position="390"/>
    </location>
</feature>
<feature type="strand" evidence="21">
    <location>
        <begin position="135"/>
        <end position="147"/>
    </location>
</feature>
<feature type="strand" evidence="21">
    <location>
        <begin position="155"/>
        <end position="162"/>
    </location>
</feature>
<feature type="helix" evidence="21">
    <location>
        <begin position="166"/>
        <end position="173"/>
    </location>
</feature>
<feature type="strand" evidence="21">
    <location>
        <begin position="187"/>
        <end position="197"/>
    </location>
</feature>
<feature type="strand" evidence="21">
    <location>
        <begin position="212"/>
        <end position="215"/>
    </location>
</feature>
<feature type="strand" evidence="21">
    <location>
        <begin position="218"/>
        <end position="220"/>
    </location>
</feature>
<feature type="helix" evidence="21">
    <location>
        <begin position="245"/>
        <end position="247"/>
    </location>
</feature>
<feature type="strand" evidence="21">
    <location>
        <begin position="252"/>
        <end position="254"/>
    </location>
</feature>
<feature type="strand" evidence="21">
    <location>
        <begin position="256"/>
        <end position="264"/>
    </location>
</feature>
<feature type="strand" evidence="21">
    <location>
        <begin position="268"/>
        <end position="279"/>
    </location>
</feature>
<feature type="helix" evidence="21">
    <location>
        <begin position="282"/>
        <end position="291"/>
    </location>
</feature>
<feature type="helix" evidence="21">
    <location>
        <begin position="297"/>
        <end position="307"/>
    </location>
</feature>
<feature type="strand" evidence="21">
    <location>
        <begin position="320"/>
        <end position="326"/>
    </location>
</feature>
<feature type="turn" evidence="21">
    <location>
        <begin position="328"/>
        <end position="330"/>
    </location>
</feature>
<feature type="strand" evidence="21">
    <location>
        <begin position="335"/>
        <end position="340"/>
    </location>
</feature>
<feature type="helix" evidence="21">
    <location>
        <begin position="351"/>
        <end position="360"/>
    </location>
</feature>
<feature type="turn" evidence="21">
    <location>
        <begin position="367"/>
        <end position="369"/>
    </location>
</feature>
<feature type="helix" evidence="21">
    <location>
        <begin position="375"/>
        <end position="377"/>
    </location>
</feature>
<feature type="strand" evidence="21">
    <location>
        <begin position="378"/>
        <end position="381"/>
    </location>
</feature>
<feature type="helix" evidence="21">
    <location>
        <begin position="382"/>
        <end position="390"/>
    </location>
</feature>
<feature type="strand" evidence="21">
    <location>
        <begin position="395"/>
        <end position="400"/>
    </location>
</feature>
<feature type="strand" evidence="21">
    <location>
        <begin position="405"/>
        <end position="407"/>
    </location>
</feature>
<sequence>MAELGELKHMVMSFRVSELQVLLGFAGRNKSGRKHELLAKALHLLKSSCAPSVQMKIKELYRRRFPRKTLGPSDLSLLSLPPGTSPVGSPGPLAPIPPTLLAPGTLLGPKREVDMHPPLPQPVHPDVTMKPLPFYEVYGELIRPTTLASTSSQRFEEAHFTFALTPQQVQQILTSREVLPGAKCDYTIQVQLRFCLCETSCPQEDYFPPNLFVKVNGKLCPLPGYLPPTKNGAEPKRPSRPINITPLARLSATVPNTIVVNWSSEFGRNYSLSVYLVRQLTAGTLLQKLRAKGIRNPDHSRALIKEKLTADPDSEVATTSLRVSLMCPLGKMRLTVPCRALTCAHLQSFDAALYLQMNEKKPTWTCPVCDKKAPYESLIIDGLFMEILSSCSDCDEIQFMEDGSWCPMKPKKEASEVCPPPGYGLDGLQYSPVQGGDPSENKKKVEVIDLTIESSSDEEDLPPTKKHCSVTSAAIPALPGSKGVLTSGHQPSSVLRSPAMGTLGGDFLSSLPLHEYPPAFPLGADIQGLDLFSFLQTESQHYGPSVITSLDEQDALGHFFQYRGTPSHFLGPLAPTLGSSHCSATPAPPPGRVSSIVAPGGALREGHGGPLPSGPSLTGCRSDIISLD</sequence>
<reference key="1">
    <citation type="journal article" date="1999" name="J. Hum. Genet.">
        <title>Isolation and chromosomal assignment of a human gene encoding protein inhibitor of activated STAT3 (PIAS3).</title>
        <authorList>
            <person name="Ueki N."/>
            <person name="Seki N."/>
            <person name="Yano K."/>
            <person name="Saito T."/>
            <person name="Masuho Y."/>
            <person name="Muramatsu M.-A."/>
        </authorList>
    </citation>
    <scope>NUCLEOTIDE SEQUENCE [MRNA] OF 2-628</scope>
</reference>
<reference key="2">
    <citation type="journal article" date="2004" name="Genome Res.">
        <title>The status, quality, and expansion of the NIH full-length cDNA project: the Mammalian Gene Collection (MGC).</title>
        <authorList>
            <consortium name="The MGC Project Team"/>
        </authorList>
    </citation>
    <scope>NUCLEOTIDE SEQUENCE [LARGE SCALE MRNA]</scope>
    <source>
        <tissue>Blood</tissue>
        <tissue>Muscle</tissue>
    </source>
</reference>
<reference key="3">
    <citation type="journal article" date="2007" name="BMC Genomics">
        <title>The full-ORF clone resource of the German cDNA consortium.</title>
        <authorList>
            <person name="Bechtel S."/>
            <person name="Rosenfelder H."/>
            <person name="Duda A."/>
            <person name="Schmidt C.P."/>
            <person name="Ernst U."/>
            <person name="Wellenreuther R."/>
            <person name="Mehrle A."/>
            <person name="Schuster C."/>
            <person name="Bahr A."/>
            <person name="Bloecker H."/>
            <person name="Heubner D."/>
            <person name="Hoerlein A."/>
            <person name="Michel G."/>
            <person name="Wedler H."/>
            <person name="Koehrer K."/>
            <person name="Ottenwaelder B."/>
            <person name="Poustka A."/>
            <person name="Wiemann S."/>
            <person name="Schupp I."/>
        </authorList>
    </citation>
    <scope>NUCLEOTIDE SEQUENCE [LARGE SCALE MRNA] OF 310-628</scope>
    <source>
        <tissue>Mammary cancer</tissue>
    </source>
</reference>
<reference key="4">
    <citation type="journal article" date="1997" name="Science">
        <title>Specific inhibition of Stat3 signal transduction by PIAS3.</title>
        <authorList>
            <person name="Chung C.D."/>
            <person name="Liao J."/>
            <person name="Liu B."/>
            <person name="Rao X."/>
            <person name="Jay P."/>
            <person name="Berta P."/>
            <person name="Shuai K."/>
        </authorList>
    </citation>
    <scope>FUNCTION</scope>
    <scope>INTERACTION WITH STAT3</scope>
    <scope>TISSUE SPECIFICITY</scope>
</reference>
<reference key="5">
    <citation type="journal article" date="2000" name="Biochem. Biophys. Res. Commun.">
        <title>Protein inhibitor of activated STAT3 regulates androgen receptor signaling in prostate carcinoma cells.</title>
        <authorList>
            <person name="Junicho A."/>
            <person name="Matsuda T."/>
            <person name="Yamamoto T."/>
            <person name="Kishi H."/>
            <person name="Korkmaz K."/>
            <person name="Saatcioglu F."/>
            <person name="Fuse H."/>
            <person name="Muraguchi A."/>
        </authorList>
    </citation>
    <scope>INTERACTION WITH AR</scope>
    <scope>INDUCTION</scope>
</reference>
<reference key="6">
    <citation type="journal article" date="2000" name="EMBO J.">
        <title>The zinc finger protein Gfi-1 can enhance STAT3 signaling by interacting with the STAT3 inhibitor PIAS3.</title>
        <authorList>
            <person name="Roedel B."/>
            <person name="Tavassoli K."/>
            <person name="Karsunky H."/>
            <person name="Schmidt T."/>
            <person name="Bachmann M."/>
            <person name="Schaper F."/>
            <person name="Heinrich P."/>
            <person name="Shuai K."/>
            <person name="Elsaesser H.-P."/>
            <person name="Moeroey T."/>
        </authorList>
    </citation>
    <scope>INTERACTION WITH GFI1</scope>
</reference>
<reference key="7">
    <citation type="journal article" date="2004" name="Biochem. Biophys. Res. Commun.">
        <title>ATBF1 enhances the suppression of STAT3 signaling by interaction with PIAS3.</title>
        <authorList>
            <person name="Nojiri S."/>
            <person name="Joh T."/>
            <person name="Miura Y."/>
            <person name="Sakata N."/>
            <person name="Nomura T."/>
            <person name="Nakao H."/>
            <person name="Sobue S."/>
            <person name="Ohara H."/>
            <person name="Asai K."/>
            <person name="Ito M."/>
        </authorList>
    </citation>
    <scope>INTERACTION WITH ZFHX3</scope>
</reference>
<reference key="8">
    <citation type="journal article" date="2004" name="J. Biol. Chem.">
        <title>Repression of the transactivating capacity of the oncoprotein PLAG1 by SUMOylation.</title>
        <authorList>
            <person name="Van Dyck F."/>
            <person name="Delvaux E.L.D."/>
            <person name="Van de Ven W.J.M."/>
            <person name="Chavez M.V."/>
        </authorList>
    </citation>
    <scope>INTERACTION WITH PLAG1</scope>
</reference>
<reference key="9">
    <citation type="journal article" date="2010" name="J. Cell Sci.">
        <title>TRIM8 modulates STAT3 activity through negative regulation of PIAS3.</title>
        <authorList>
            <person name="Okumura F."/>
            <person name="Matsunaga Y."/>
            <person name="Katayama Y."/>
            <person name="Nakayama K.I."/>
            <person name="Hatakeyama S."/>
        </authorList>
    </citation>
    <scope>INTERACTION WITH TRIM8</scope>
</reference>
<reference key="10">
    <citation type="journal article" date="2011" name="J. Biol. Chem.">
        <title>SUMOylation and SUMO-interacting motif (SIM) of metastasis tumor antigen 1 (MTA1) synergistically regulate its transcriptional repressor function.</title>
        <authorList>
            <person name="Cong L."/>
            <person name="Pakala S.B."/>
            <person name="Ohshiro K."/>
            <person name="Li D.Q."/>
            <person name="Kumar R."/>
        </authorList>
    </citation>
    <scope>FUNCTION</scope>
    <scope>INTERACTION WITH MTA1</scope>
</reference>
<reference key="11">
    <citation type="journal article" date="2014" name="Nat. Commun.">
        <title>Modification of DBC1 by SUMO2/3 is crucial for p53-mediated apoptosis in response to DNA damage.</title>
        <authorList>
            <person name="Park J.H."/>
            <person name="Lee S.W."/>
            <person name="Yang S.W."/>
            <person name="Yoo H.M."/>
            <person name="Park J.M."/>
            <person name="Seong M.W."/>
            <person name="Ka S.H."/>
            <person name="Oh K.H."/>
            <person name="Jeon Y.J."/>
            <person name="Chung C.H."/>
        </authorList>
    </citation>
    <scope>FUNCTION</scope>
    <scope>INTERACTION WITH CCAR2</scope>
</reference>
<reference key="12">
    <citation type="journal article" date="2014" name="Nat. Struct. Mol. Biol.">
        <title>Uncovering global SUMOylation signaling networks in a site-specific manner.</title>
        <authorList>
            <person name="Hendriks I.A."/>
            <person name="D'Souza R.C."/>
            <person name="Yang B."/>
            <person name="Verlaan-de Vries M."/>
            <person name="Mann M."/>
            <person name="Vertegaal A.C."/>
        </authorList>
    </citation>
    <scope>SUMOYLATION [LARGE SCALE ANALYSIS] AT LYS-230 AND LYS-307</scope>
    <scope>IDENTIFICATION BY MASS SPECTROMETRY [LARGE SCALE ANALYSIS]</scope>
</reference>
<reference key="13">
    <citation type="journal article" date="2014" name="PLoS ONE">
        <title>Characterization of nuclear localization and SUMOylation of the ATBF1 transcription factor in epithelial cells.</title>
        <authorList>
            <person name="Sun X."/>
            <person name="Li J."/>
            <person name="Dong F.N."/>
            <person name="Dong J.T."/>
        </authorList>
    </citation>
    <scope>FUNCTION</scope>
</reference>
<reference key="14">
    <citation type="journal article" date="2015" name="Cell Rep.">
        <title>SUMO-2 orchestrates chromatin modifiers in response to DNA damage.</title>
        <authorList>
            <person name="Hendriks I.A."/>
            <person name="Treffers L.W."/>
            <person name="Verlaan-de Vries M."/>
            <person name="Olsen J.V."/>
            <person name="Vertegaal A.C."/>
        </authorList>
    </citation>
    <scope>SUMOYLATION [LARGE SCALE ANALYSIS] AT LYS-230</scope>
    <scope>IDENTIFICATION BY MASS SPECTROMETRY [LARGE SCALE ANALYSIS]</scope>
</reference>
<reference key="15">
    <citation type="journal article" date="2017" name="Nat. Commun.">
        <title>HSP70-Hrd1 axis precludes the oncorepressor potential of N-terminal misfolded Blimp-1s in lymphoma cells.</title>
        <authorList>
            <person name="Wang W.F."/>
            <person name="Yan L."/>
            <person name="Liu Z."/>
            <person name="Liu L.X."/>
            <person name="Lin J."/>
            <person name="Liu Z.Y."/>
            <person name="Chen X.P."/>
            <person name="Zhang W."/>
            <person name="Xu Z.Z."/>
            <person name="Shi T."/>
            <person name="Li J.M."/>
            <person name="Zhao Y.L."/>
            <person name="Meng G."/>
            <person name="Xia Y."/>
            <person name="Li J.Y."/>
            <person name="Zhu J."/>
        </authorList>
    </citation>
    <scope>INTERACTION WITH PRDM1</scope>
</reference>
<reference key="16">
    <citation type="journal article" date="2017" name="Nat. Struct. Mol. Biol.">
        <title>Site-specific mapping of the human SUMO proteome reveals co-modification with phosphorylation.</title>
        <authorList>
            <person name="Hendriks I.A."/>
            <person name="Lyon D."/>
            <person name="Young C."/>
            <person name="Jensen L.J."/>
            <person name="Vertegaal A.C."/>
            <person name="Nielsen M.L."/>
        </authorList>
    </citation>
    <scope>SUMOYLATION [LARGE SCALE ANALYSIS] AT LYS-46; LYS-56; LYS-230; LYS-307; LYS-466 AND LYS-482</scope>
    <scope>IDENTIFICATION BY MASS SPECTROMETRY [LARGE SCALE ANALYSIS]</scope>
</reference>
<keyword id="KW-0002">3D-structure</keyword>
<keyword id="KW-0963">Cytoplasm</keyword>
<keyword id="KW-1017">Isopeptide bond</keyword>
<keyword id="KW-0479">Metal-binding</keyword>
<keyword id="KW-0539">Nucleus</keyword>
<keyword id="KW-1267">Proteomics identification</keyword>
<keyword id="KW-1185">Reference proteome</keyword>
<keyword id="KW-0804">Transcription</keyword>
<keyword id="KW-0805">Transcription regulation</keyword>
<keyword id="KW-0808">Transferase</keyword>
<keyword id="KW-0832">Ubl conjugation</keyword>
<keyword id="KW-0833">Ubl conjugation pathway</keyword>
<keyword id="KW-0862">Zinc</keyword>
<keyword id="KW-0863">Zinc-finger</keyword>
<comment type="function">
    <text evidence="12 13 14 16">Functions as an E3-type small ubiquitin-like modifier (SUMO) ligase, stabilizing the interaction between UBE2I and the substrate, and as a SUMO-tethering factor. Plays a crucial role as a transcriptional coregulation in various cellular pathways, including the STAT pathway and the steroid hormone signaling pathway. Involved in regulating STAT3 signaling via inhibiting STAT3 DNA-binding and suppressing cell growth. Enhances the sumoylation of MTA1 and may participate in its paralog-selective sumoylation (PubMed:21965678, PubMed:9388184). Sumoylates CCAR2 which promotes its interaction with SIRT1 (PubMed:25406032). Diminishes the sumoylation of ZFHX3 by preventing the colocalization of ZFHX3 with SUMO1 in the nucleus (PubMed:24651376).</text>
</comment>
<comment type="pathway">
    <text>Protein modification; protein sumoylation.</text>
</comment>
<comment type="subunit">
    <text evidence="2 7 8 9 10 11 12 14 15 16">Monomer (By similarity). Binds SUMO1 and UBE2I. Interacts with BCL11A, HMGA2, IRF1, MITF and NCOA2. Interacts with STAT5; the interaction occurs on stimulation by PRL. Interacts with GFI1; the interaction relieves the inhibitory effect of PIAS3 on STAT3-mediated transcriptional activity (By similarity). Interacts with AR, PLAG1 and ZFHX3. Interacts with STAT3; the interaction occurs on stimulation by IL6, CNTF or OSM and inhibits the DNA binding activity of STAT3. Interacts with MTA1. Interacts with CCAR2 (via N-terminus). Interacts with TRIM8 (PubMed:20516148). Interacts with PRDM1/Blimp-1 (PubMed:28842558).</text>
</comment>
<comment type="interaction">
    <interactant intactId="EBI-2803703">
        <id>Q9Y6X2</id>
    </interactant>
    <interactant intactId="EBI-399080">
        <id>Q92993</id>
        <label>KAT5</label>
    </interactant>
    <organismsDiffer>false</organismsDiffer>
    <experiments>3</experiments>
</comment>
<comment type="interaction">
    <interactant intactId="EBI-2803703">
        <id>Q9Y6X2</id>
    </interactant>
    <interactant intactId="EBI-11742507">
        <id>Q8TAP4-4</id>
        <label>LMO3</label>
    </interactant>
    <organismsDiffer>false</organismsDiffer>
    <experiments>3</experiments>
</comment>
<comment type="interaction">
    <interactant intactId="EBI-2803703">
        <id>Q9Y6X2</id>
    </interactant>
    <interactant intactId="EBI-867196">
        <id>Q9UIS9</id>
        <label>MBD1</label>
    </interactant>
    <organismsDiffer>false</organismsDiffer>
    <experiments>3</experiments>
</comment>
<comment type="interaction">
    <interactant intactId="EBI-2803703">
        <id>Q9Y6X2</id>
    </interactant>
    <interactant intactId="EBI-725795">
        <id>O60664</id>
        <label>PLIN3</label>
    </interactant>
    <organismsDiffer>false</organismsDiffer>
    <experiments>3</experiments>
</comment>
<comment type="interaction">
    <interactant intactId="EBI-2803703">
        <id>Q9Y6X2</id>
    </interactant>
    <interactant intactId="EBI-1383528">
        <id>P17252</id>
        <label>PRKCA</label>
    </interactant>
    <organismsDiffer>false</organismsDiffer>
    <experiments>3</experiments>
</comment>
<comment type="interaction">
    <interactant intactId="EBI-2803703">
        <id>Q9Y6X2</id>
    </interactant>
    <interactant intactId="EBI-9090795">
        <id>Q15047-2</id>
        <label>SETDB1</label>
    </interactant>
    <organismsDiffer>false</organismsDiffer>
    <experiments>3</experiments>
</comment>
<comment type="interaction">
    <interactant intactId="EBI-2803703">
        <id>Q9Y6X2</id>
    </interactant>
    <interactant intactId="EBI-359832">
        <id>P61981</id>
        <label>YWHAG</label>
    </interactant>
    <organismsDiffer>false</organismsDiffer>
    <experiments>3</experiments>
</comment>
<comment type="subcellular location">
    <subcellularLocation>
        <location evidence="2">Cytoplasm</location>
    </subcellularLocation>
    <subcellularLocation>
        <location evidence="2">Nucleus</location>
    </subcellularLocation>
    <subcellularLocation>
        <location evidence="2">Nucleus speckle</location>
    </subcellularLocation>
    <text evidence="2">Colocalizes with MITF in the nucleus. Colocalizes with GFI1 in nuclear dots. Colocalizes with SUMO1 in nuclear granules.</text>
</comment>
<comment type="tissue specificity">
    <text evidence="16">Widely expressed.</text>
</comment>
<comment type="induction">
    <text evidence="8">By dihydrotestosterone (DHT) in prostate cancer cells.</text>
</comment>
<comment type="domain">
    <text>The PINIT domain of PIAS3 is required for STAT3-PIAS3 interaction and for translocation to the nucleus.</text>
</comment>
<comment type="domain">
    <text>The LXXLL motif is a transcriptional coregulator signature.</text>
</comment>
<comment type="PTM">
    <text evidence="1">Sumoylated.</text>
</comment>
<comment type="similarity">
    <text evidence="17">Belongs to the PIAS family.</text>
</comment>
<comment type="sequence caution" evidence="17">
    <conflict type="erroneous initiation">
        <sequence resource="EMBL-CDS" id="BAA78533"/>
    </conflict>
</comment>
<comment type="online information" name="Atlas of Genetics and Cytogenetics in Oncology and Haematology">
    <link uri="https://atlasgeneticsoncology.org/gene/41709/PIAS3"/>
</comment>
<accession>Q9Y6X2</accession>
<accession>Q9UFI3</accession>
<organism>
    <name type="scientific">Homo sapiens</name>
    <name type="common">Human</name>
    <dbReference type="NCBI Taxonomy" id="9606"/>
    <lineage>
        <taxon>Eukaryota</taxon>
        <taxon>Metazoa</taxon>
        <taxon>Chordata</taxon>
        <taxon>Craniata</taxon>
        <taxon>Vertebrata</taxon>
        <taxon>Euteleostomi</taxon>
        <taxon>Mammalia</taxon>
        <taxon>Eutheria</taxon>
        <taxon>Euarchontoglires</taxon>
        <taxon>Primates</taxon>
        <taxon>Haplorrhini</taxon>
        <taxon>Catarrhini</taxon>
        <taxon>Hominidae</taxon>
        <taxon>Homo</taxon>
    </lineage>
</organism>
<evidence type="ECO:0000250" key="1"/>
<evidence type="ECO:0000250" key="2">
    <source>
        <dbReference type="UniProtKB" id="O54714"/>
    </source>
</evidence>
<evidence type="ECO:0000255" key="3">
    <source>
        <dbReference type="PROSITE-ProRule" id="PRU00186"/>
    </source>
</evidence>
<evidence type="ECO:0000255" key="4">
    <source>
        <dbReference type="PROSITE-ProRule" id="PRU00452"/>
    </source>
</evidence>
<evidence type="ECO:0000255" key="5">
    <source>
        <dbReference type="PROSITE-ProRule" id="PRU00799"/>
    </source>
</evidence>
<evidence type="ECO:0000256" key="6">
    <source>
        <dbReference type="SAM" id="MobiDB-lite"/>
    </source>
</evidence>
<evidence type="ECO:0000269" key="7">
    <source>
    </source>
</evidence>
<evidence type="ECO:0000269" key="8">
    <source>
    </source>
</evidence>
<evidence type="ECO:0000269" key="9">
    <source>
    </source>
</evidence>
<evidence type="ECO:0000269" key="10">
    <source>
    </source>
</evidence>
<evidence type="ECO:0000269" key="11">
    <source>
    </source>
</evidence>
<evidence type="ECO:0000269" key="12">
    <source>
    </source>
</evidence>
<evidence type="ECO:0000269" key="13">
    <source>
    </source>
</evidence>
<evidence type="ECO:0000269" key="14">
    <source>
    </source>
</evidence>
<evidence type="ECO:0000269" key="15">
    <source>
    </source>
</evidence>
<evidence type="ECO:0000269" key="16">
    <source>
    </source>
</evidence>
<evidence type="ECO:0000305" key="17"/>
<evidence type="ECO:0007744" key="18">
    <source>
    </source>
</evidence>
<evidence type="ECO:0007744" key="19">
    <source>
    </source>
</evidence>
<evidence type="ECO:0007744" key="20">
    <source>
    </source>
</evidence>
<evidence type="ECO:0007829" key="21">
    <source>
        <dbReference type="PDB" id="4MVT"/>
    </source>
</evidence>